<proteinExistence type="inferred from homology"/>
<evidence type="ECO:0000255" key="1">
    <source>
        <dbReference type="HAMAP-Rule" id="MF_00223"/>
    </source>
</evidence>
<sequence length="222" mass="24831">MPSLSKEAALVHEALVARGLETPLRPPVHEMDNETRKSLIAGHMTEIMQLLNLDLADDSLMETPHRIAKMYVDEIFSGLDYANFPKITLIENKMKVDEMVTVRDITLTSTCEHHFVTIDGKATVAYIPKDSVIGLSKINRIVQFFAQRPQVQERLTQQILIALQTLLGTNNVAVSIDAVHYCVKARGIRDATSATTTTSLGGLFKSSQNTRHEFLRAVRHHN</sequence>
<feature type="chain" id="PRO_1000100172" description="GTP cyclohydrolase 1">
    <location>
        <begin position="1"/>
        <end position="222"/>
    </location>
</feature>
<feature type="binding site" evidence="1">
    <location>
        <position position="111"/>
    </location>
    <ligand>
        <name>Zn(2+)</name>
        <dbReference type="ChEBI" id="CHEBI:29105"/>
    </ligand>
</feature>
<feature type="binding site" evidence="1">
    <location>
        <position position="114"/>
    </location>
    <ligand>
        <name>Zn(2+)</name>
        <dbReference type="ChEBI" id="CHEBI:29105"/>
    </ligand>
</feature>
<feature type="binding site" evidence="1">
    <location>
        <position position="182"/>
    </location>
    <ligand>
        <name>Zn(2+)</name>
        <dbReference type="ChEBI" id="CHEBI:29105"/>
    </ligand>
</feature>
<keyword id="KW-0342">GTP-binding</keyword>
<keyword id="KW-0378">Hydrolase</keyword>
<keyword id="KW-0479">Metal-binding</keyword>
<keyword id="KW-0547">Nucleotide-binding</keyword>
<keyword id="KW-0554">One-carbon metabolism</keyword>
<keyword id="KW-0862">Zinc</keyword>
<dbReference type="EC" id="3.5.4.16" evidence="1"/>
<dbReference type="EMBL" id="AP009240">
    <property type="protein sequence ID" value="BAG77944.1"/>
    <property type="molecule type" value="Genomic_DNA"/>
</dbReference>
<dbReference type="RefSeq" id="WP_001139613.1">
    <property type="nucleotide sequence ID" value="NC_011415.1"/>
</dbReference>
<dbReference type="SMR" id="B6I8K3"/>
<dbReference type="GeneID" id="93775029"/>
<dbReference type="KEGG" id="ecy:ECSE_2420"/>
<dbReference type="HOGENOM" id="CLU_049768_3_2_6"/>
<dbReference type="UniPathway" id="UPA00848">
    <property type="reaction ID" value="UER00151"/>
</dbReference>
<dbReference type="Proteomes" id="UP000008199">
    <property type="component" value="Chromosome"/>
</dbReference>
<dbReference type="GO" id="GO:0005737">
    <property type="term" value="C:cytoplasm"/>
    <property type="evidence" value="ECO:0007669"/>
    <property type="project" value="TreeGrafter"/>
</dbReference>
<dbReference type="GO" id="GO:0005525">
    <property type="term" value="F:GTP binding"/>
    <property type="evidence" value="ECO:0007669"/>
    <property type="project" value="UniProtKB-KW"/>
</dbReference>
<dbReference type="GO" id="GO:0003934">
    <property type="term" value="F:GTP cyclohydrolase I activity"/>
    <property type="evidence" value="ECO:0007669"/>
    <property type="project" value="UniProtKB-UniRule"/>
</dbReference>
<dbReference type="GO" id="GO:0008270">
    <property type="term" value="F:zinc ion binding"/>
    <property type="evidence" value="ECO:0007669"/>
    <property type="project" value="UniProtKB-UniRule"/>
</dbReference>
<dbReference type="GO" id="GO:0006730">
    <property type="term" value="P:one-carbon metabolic process"/>
    <property type="evidence" value="ECO:0007669"/>
    <property type="project" value="UniProtKB-UniRule"/>
</dbReference>
<dbReference type="GO" id="GO:0006729">
    <property type="term" value="P:tetrahydrobiopterin biosynthetic process"/>
    <property type="evidence" value="ECO:0007669"/>
    <property type="project" value="TreeGrafter"/>
</dbReference>
<dbReference type="GO" id="GO:0046654">
    <property type="term" value="P:tetrahydrofolate biosynthetic process"/>
    <property type="evidence" value="ECO:0007669"/>
    <property type="project" value="UniProtKB-UniRule"/>
</dbReference>
<dbReference type="CDD" id="cd00642">
    <property type="entry name" value="GTP_cyclohydro1"/>
    <property type="match status" value="1"/>
</dbReference>
<dbReference type="FunFam" id="1.10.286.10:FF:000002">
    <property type="entry name" value="GTP cyclohydrolase 1"/>
    <property type="match status" value="1"/>
</dbReference>
<dbReference type="FunFam" id="3.30.1130.10:FF:000001">
    <property type="entry name" value="GTP cyclohydrolase 1"/>
    <property type="match status" value="1"/>
</dbReference>
<dbReference type="Gene3D" id="1.10.286.10">
    <property type="match status" value="1"/>
</dbReference>
<dbReference type="Gene3D" id="3.30.1130.10">
    <property type="match status" value="1"/>
</dbReference>
<dbReference type="HAMAP" id="MF_00223">
    <property type="entry name" value="FolE"/>
    <property type="match status" value="1"/>
</dbReference>
<dbReference type="InterPro" id="IPR043133">
    <property type="entry name" value="GTP-CH-I_C/QueF"/>
</dbReference>
<dbReference type="InterPro" id="IPR043134">
    <property type="entry name" value="GTP-CH-I_N"/>
</dbReference>
<dbReference type="InterPro" id="IPR001474">
    <property type="entry name" value="GTP_CycHdrlase_I"/>
</dbReference>
<dbReference type="InterPro" id="IPR018234">
    <property type="entry name" value="GTP_CycHdrlase_I_CS"/>
</dbReference>
<dbReference type="InterPro" id="IPR020602">
    <property type="entry name" value="GTP_CycHdrlase_I_dom"/>
</dbReference>
<dbReference type="NCBIfam" id="TIGR00063">
    <property type="entry name" value="folE"/>
    <property type="match status" value="1"/>
</dbReference>
<dbReference type="NCBIfam" id="NF006824">
    <property type="entry name" value="PRK09347.1-1"/>
    <property type="match status" value="1"/>
</dbReference>
<dbReference type="NCBIfam" id="NF006826">
    <property type="entry name" value="PRK09347.1-3"/>
    <property type="match status" value="1"/>
</dbReference>
<dbReference type="PANTHER" id="PTHR11109:SF7">
    <property type="entry name" value="GTP CYCLOHYDROLASE 1"/>
    <property type="match status" value="1"/>
</dbReference>
<dbReference type="PANTHER" id="PTHR11109">
    <property type="entry name" value="GTP CYCLOHYDROLASE I"/>
    <property type="match status" value="1"/>
</dbReference>
<dbReference type="Pfam" id="PF01227">
    <property type="entry name" value="GTP_cyclohydroI"/>
    <property type="match status" value="1"/>
</dbReference>
<dbReference type="SUPFAM" id="SSF55620">
    <property type="entry name" value="Tetrahydrobiopterin biosynthesis enzymes-like"/>
    <property type="match status" value="1"/>
</dbReference>
<dbReference type="PROSITE" id="PS00859">
    <property type="entry name" value="GTP_CYCLOHYDROL_1_1"/>
    <property type="match status" value="1"/>
</dbReference>
<dbReference type="PROSITE" id="PS00860">
    <property type="entry name" value="GTP_CYCLOHYDROL_1_2"/>
    <property type="match status" value="1"/>
</dbReference>
<organism>
    <name type="scientific">Escherichia coli (strain SE11)</name>
    <dbReference type="NCBI Taxonomy" id="409438"/>
    <lineage>
        <taxon>Bacteria</taxon>
        <taxon>Pseudomonadati</taxon>
        <taxon>Pseudomonadota</taxon>
        <taxon>Gammaproteobacteria</taxon>
        <taxon>Enterobacterales</taxon>
        <taxon>Enterobacteriaceae</taxon>
        <taxon>Escherichia</taxon>
    </lineage>
</organism>
<protein>
    <recommendedName>
        <fullName evidence="1">GTP cyclohydrolase 1</fullName>
        <ecNumber evidence="1">3.5.4.16</ecNumber>
    </recommendedName>
    <alternativeName>
        <fullName evidence="1">GTP cyclohydrolase I</fullName>
        <shortName evidence="1">GTP-CH-I</shortName>
    </alternativeName>
</protein>
<name>GCH1_ECOSE</name>
<comment type="catalytic activity">
    <reaction evidence="1">
        <text>GTP + H2O = 7,8-dihydroneopterin 3'-triphosphate + formate + H(+)</text>
        <dbReference type="Rhea" id="RHEA:17473"/>
        <dbReference type="ChEBI" id="CHEBI:15377"/>
        <dbReference type="ChEBI" id="CHEBI:15378"/>
        <dbReference type="ChEBI" id="CHEBI:15740"/>
        <dbReference type="ChEBI" id="CHEBI:37565"/>
        <dbReference type="ChEBI" id="CHEBI:58462"/>
        <dbReference type="EC" id="3.5.4.16"/>
    </reaction>
</comment>
<comment type="pathway">
    <text evidence="1">Cofactor biosynthesis; 7,8-dihydroneopterin triphosphate biosynthesis; 7,8-dihydroneopterin triphosphate from GTP: step 1/1.</text>
</comment>
<comment type="subunit">
    <text evidence="1">Homomer.</text>
</comment>
<comment type="similarity">
    <text evidence="1">Belongs to the GTP cyclohydrolase I family.</text>
</comment>
<accession>B6I8K3</accession>
<reference key="1">
    <citation type="journal article" date="2008" name="DNA Res.">
        <title>Complete genome sequence and comparative analysis of the wild-type commensal Escherichia coli strain SE11 isolated from a healthy adult.</title>
        <authorList>
            <person name="Oshima K."/>
            <person name="Toh H."/>
            <person name="Ogura Y."/>
            <person name="Sasamoto H."/>
            <person name="Morita H."/>
            <person name="Park S.-H."/>
            <person name="Ooka T."/>
            <person name="Iyoda S."/>
            <person name="Taylor T.D."/>
            <person name="Hayashi T."/>
            <person name="Itoh K."/>
            <person name="Hattori M."/>
        </authorList>
    </citation>
    <scope>NUCLEOTIDE SEQUENCE [LARGE SCALE GENOMIC DNA]</scope>
    <source>
        <strain>SE11</strain>
    </source>
</reference>
<gene>
    <name evidence="1" type="primary">folE</name>
    <name type="ordered locus">ECSE_2420</name>
</gene>